<reference key="1">
    <citation type="journal article" date="2009" name="Environ. Microbiol.">
        <title>Genome sequence of Desulfobacterium autotrophicum HRM2, a marine sulfate reducer oxidizing organic carbon completely to carbon dioxide.</title>
        <authorList>
            <person name="Strittmatter A.W."/>
            <person name="Liesegang H."/>
            <person name="Rabus R."/>
            <person name="Decker I."/>
            <person name="Amann J."/>
            <person name="Andres S."/>
            <person name="Henne A."/>
            <person name="Fricke W.F."/>
            <person name="Martinez-Arias R."/>
            <person name="Bartels D."/>
            <person name="Goesmann A."/>
            <person name="Krause L."/>
            <person name="Puehler A."/>
            <person name="Klenk H.P."/>
            <person name="Richter M."/>
            <person name="Schuler M."/>
            <person name="Gloeckner F.O."/>
            <person name="Meyerdierks A."/>
            <person name="Gottschalk G."/>
            <person name="Amann R."/>
        </authorList>
    </citation>
    <scope>NUCLEOTIDE SEQUENCE [LARGE SCALE GENOMIC DNA]</scope>
    <source>
        <strain>ATCC 43914 / DSM 3382 / VKM B-1955 / HRM2</strain>
    </source>
</reference>
<gene>
    <name evidence="1" type="primary">rsmH</name>
    <name type="synonym">mraW</name>
    <name type="ordered locus">HRM2_12630</name>
</gene>
<proteinExistence type="inferred from homology"/>
<comment type="function">
    <text evidence="1">Specifically methylates the N4 position of cytidine in position 1402 (C1402) of 16S rRNA.</text>
</comment>
<comment type="catalytic activity">
    <reaction evidence="1">
        <text>cytidine(1402) in 16S rRNA + S-adenosyl-L-methionine = N(4)-methylcytidine(1402) in 16S rRNA + S-adenosyl-L-homocysteine + H(+)</text>
        <dbReference type="Rhea" id="RHEA:42928"/>
        <dbReference type="Rhea" id="RHEA-COMP:10286"/>
        <dbReference type="Rhea" id="RHEA-COMP:10287"/>
        <dbReference type="ChEBI" id="CHEBI:15378"/>
        <dbReference type="ChEBI" id="CHEBI:57856"/>
        <dbReference type="ChEBI" id="CHEBI:59789"/>
        <dbReference type="ChEBI" id="CHEBI:74506"/>
        <dbReference type="ChEBI" id="CHEBI:82748"/>
        <dbReference type="EC" id="2.1.1.199"/>
    </reaction>
</comment>
<comment type="subcellular location">
    <subcellularLocation>
        <location evidence="1">Cytoplasm</location>
    </subcellularLocation>
</comment>
<comment type="similarity">
    <text evidence="1">Belongs to the methyltransferase superfamily. RsmH family.</text>
</comment>
<evidence type="ECO:0000255" key="1">
    <source>
        <dbReference type="HAMAP-Rule" id="MF_01007"/>
    </source>
</evidence>
<protein>
    <recommendedName>
        <fullName evidence="1">Ribosomal RNA small subunit methyltransferase H</fullName>
        <ecNumber evidence="1">2.1.1.199</ecNumber>
    </recommendedName>
    <alternativeName>
        <fullName evidence="1">16S rRNA m(4)C1402 methyltransferase</fullName>
    </alternativeName>
    <alternativeName>
        <fullName evidence="1">rRNA (cytosine-N(4)-)-methyltransferase RsmH</fullName>
    </alternativeName>
</protein>
<organism>
    <name type="scientific">Desulforapulum autotrophicum (strain ATCC 43914 / DSM 3382 / VKM B-1955 / HRM2)</name>
    <name type="common">Desulfobacterium autotrophicum</name>
    <dbReference type="NCBI Taxonomy" id="177437"/>
    <lineage>
        <taxon>Bacteria</taxon>
        <taxon>Pseudomonadati</taxon>
        <taxon>Thermodesulfobacteriota</taxon>
        <taxon>Desulfobacteria</taxon>
        <taxon>Desulfobacterales</taxon>
        <taxon>Desulfobacteraceae</taxon>
        <taxon>Desulforapulum</taxon>
    </lineage>
</organism>
<name>RSMH_DESAH</name>
<accession>C0Q8N5</accession>
<keyword id="KW-0963">Cytoplasm</keyword>
<keyword id="KW-0489">Methyltransferase</keyword>
<keyword id="KW-1185">Reference proteome</keyword>
<keyword id="KW-0698">rRNA processing</keyword>
<keyword id="KW-0949">S-adenosyl-L-methionine</keyword>
<keyword id="KW-0808">Transferase</keyword>
<feature type="chain" id="PRO_0000386847" description="Ribosomal RNA small subunit methyltransferase H">
    <location>
        <begin position="1"/>
        <end position="312"/>
    </location>
</feature>
<feature type="binding site" evidence="1">
    <location>
        <begin position="33"/>
        <end position="35"/>
    </location>
    <ligand>
        <name>S-adenosyl-L-methionine</name>
        <dbReference type="ChEBI" id="CHEBI:59789"/>
    </ligand>
</feature>
<feature type="binding site" evidence="1">
    <location>
        <position position="53"/>
    </location>
    <ligand>
        <name>S-adenosyl-L-methionine</name>
        <dbReference type="ChEBI" id="CHEBI:59789"/>
    </ligand>
</feature>
<feature type="binding site" evidence="1">
    <location>
        <position position="80"/>
    </location>
    <ligand>
        <name>S-adenosyl-L-methionine</name>
        <dbReference type="ChEBI" id="CHEBI:59789"/>
    </ligand>
</feature>
<feature type="binding site" evidence="1">
    <location>
        <position position="101"/>
    </location>
    <ligand>
        <name>S-adenosyl-L-methionine</name>
        <dbReference type="ChEBI" id="CHEBI:59789"/>
    </ligand>
</feature>
<feature type="binding site" evidence="1">
    <location>
        <position position="108"/>
    </location>
    <ligand>
        <name>S-adenosyl-L-methionine</name>
        <dbReference type="ChEBI" id="CHEBI:59789"/>
    </ligand>
</feature>
<sequence length="312" mass="35124">MKFEHRSVMPREVRDGLDLKPGETCVDCTLGGSGHAVTSLAAVLPNGRLIGIDQDLDAIENAHRVFADDMANVSIFHDNFSHLPAILDSLGIKGVDGILLDLGLSLHQLRKGQRGFSFKGDEPLDMRMDMRTALTAADLVNTLEERALVDIFFKYGEEKMSRKIARAIVRQRASAPITRNCELAEIVRAAIPAKIVHQQKIHPATRVFQALRISVNRELEQLERFLETFVDFLNPGGRICIISFHSLEDRMVKRRFRALEQGCTCPRDFPECVCGFKPRLKSVTKRAVMPTPEEIEINPMARSARLRVAWRV</sequence>
<dbReference type="EC" id="2.1.1.199" evidence="1"/>
<dbReference type="EMBL" id="CP001087">
    <property type="protein sequence ID" value="ACN14375.1"/>
    <property type="molecule type" value="Genomic_DNA"/>
</dbReference>
<dbReference type="RefSeq" id="WP_015903162.1">
    <property type="nucleotide sequence ID" value="NC_012108.1"/>
</dbReference>
<dbReference type="SMR" id="C0Q8N5"/>
<dbReference type="STRING" id="177437.HRM2_12630"/>
<dbReference type="KEGG" id="dat:HRM2_12630"/>
<dbReference type="eggNOG" id="COG0275">
    <property type="taxonomic scope" value="Bacteria"/>
</dbReference>
<dbReference type="HOGENOM" id="CLU_038422_2_0_7"/>
<dbReference type="OrthoDB" id="9806637at2"/>
<dbReference type="Proteomes" id="UP000000442">
    <property type="component" value="Chromosome"/>
</dbReference>
<dbReference type="GO" id="GO:0005737">
    <property type="term" value="C:cytoplasm"/>
    <property type="evidence" value="ECO:0007669"/>
    <property type="project" value="UniProtKB-SubCell"/>
</dbReference>
<dbReference type="GO" id="GO:0071424">
    <property type="term" value="F:rRNA (cytosine-N4-)-methyltransferase activity"/>
    <property type="evidence" value="ECO:0007669"/>
    <property type="project" value="UniProtKB-UniRule"/>
</dbReference>
<dbReference type="GO" id="GO:0070475">
    <property type="term" value="P:rRNA base methylation"/>
    <property type="evidence" value="ECO:0007669"/>
    <property type="project" value="UniProtKB-UniRule"/>
</dbReference>
<dbReference type="FunFam" id="1.10.150.170:FF:000003">
    <property type="entry name" value="Ribosomal RNA small subunit methyltransferase H"/>
    <property type="match status" value="1"/>
</dbReference>
<dbReference type="Gene3D" id="1.10.150.170">
    <property type="entry name" value="Putative methyltransferase TM0872, insert domain"/>
    <property type="match status" value="1"/>
</dbReference>
<dbReference type="Gene3D" id="3.40.50.150">
    <property type="entry name" value="Vaccinia Virus protein VP39"/>
    <property type="match status" value="1"/>
</dbReference>
<dbReference type="HAMAP" id="MF_01007">
    <property type="entry name" value="16SrRNA_methyltr_H"/>
    <property type="match status" value="1"/>
</dbReference>
<dbReference type="InterPro" id="IPR002903">
    <property type="entry name" value="RsmH"/>
</dbReference>
<dbReference type="InterPro" id="IPR023397">
    <property type="entry name" value="SAM-dep_MeTrfase_MraW_recog"/>
</dbReference>
<dbReference type="InterPro" id="IPR029063">
    <property type="entry name" value="SAM-dependent_MTases_sf"/>
</dbReference>
<dbReference type="NCBIfam" id="TIGR00006">
    <property type="entry name" value="16S rRNA (cytosine(1402)-N(4))-methyltransferase RsmH"/>
    <property type="match status" value="1"/>
</dbReference>
<dbReference type="PANTHER" id="PTHR11265:SF0">
    <property type="entry name" value="12S RRNA N4-METHYLCYTIDINE METHYLTRANSFERASE"/>
    <property type="match status" value="1"/>
</dbReference>
<dbReference type="PANTHER" id="PTHR11265">
    <property type="entry name" value="S-ADENOSYL-METHYLTRANSFERASE MRAW"/>
    <property type="match status" value="1"/>
</dbReference>
<dbReference type="Pfam" id="PF01795">
    <property type="entry name" value="Methyltransf_5"/>
    <property type="match status" value="1"/>
</dbReference>
<dbReference type="PIRSF" id="PIRSF004486">
    <property type="entry name" value="MraW"/>
    <property type="match status" value="1"/>
</dbReference>
<dbReference type="SUPFAM" id="SSF81799">
    <property type="entry name" value="Putative methyltransferase TM0872, insert domain"/>
    <property type="match status" value="1"/>
</dbReference>
<dbReference type="SUPFAM" id="SSF53335">
    <property type="entry name" value="S-adenosyl-L-methionine-dependent methyltransferases"/>
    <property type="match status" value="1"/>
</dbReference>